<name>ILVC_STAS1</name>
<feature type="chain" id="PRO_0000226204" description="Ketol-acid reductoisomerase (NADP(+))">
    <location>
        <begin position="1"/>
        <end position="334"/>
    </location>
</feature>
<feature type="domain" description="KARI N-terminal Rossmann" evidence="2">
    <location>
        <begin position="1"/>
        <end position="181"/>
    </location>
</feature>
<feature type="domain" description="KARI C-terminal knotted" evidence="3">
    <location>
        <begin position="182"/>
        <end position="327"/>
    </location>
</feature>
<feature type="active site" evidence="1">
    <location>
        <position position="107"/>
    </location>
</feature>
<feature type="binding site" evidence="1">
    <location>
        <begin position="25"/>
        <end position="28"/>
    </location>
    <ligand>
        <name>NADP(+)</name>
        <dbReference type="ChEBI" id="CHEBI:58349"/>
    </ligand>
</feature>
<feature type="binding site" evidence="1">
    <location>
        <position position="48"/>
    </location>
    <ligand>
        <name>NADP(+)</name>
        <dbReference type="ChEBI" id="CHEBI:58349"/>
    </ligand>
</feature>
<feature type="binding site" evidence="1">
    <location>
        <position position="52"/>
    </location>
    <ligand>
        <name>NADP(+)</name>
        <dbReference type="ChEBI" id="CHEBI:58349"/>
    </ligand>
</feature>
<feature type="binding site" evidence="1">
    <location>
        <begin position="82"/>
        <end position="85"/>
    </location>
    <ligand>
        <name>NADP(+)</name>
        <dbReference type="ChEBI" id="CHEBI:58349"/>
    </ligand>
</feature>
<feature type="binding site" evidence="1">
    <location>
        <position position="133"/>
    </location>
    <ligand>
        <name>NADP(+)</name>
        <dbReference type="ChEBI" id="CHEBI:58349"/>
    </ligand>
</feature>
<feature type="binding site" evidence="1">
    <location>
        <position position="190"/>
    </location>
    <ligand>
        <name>Mg(2+)</name>
        <dbReference type="ChEBI" id="CHEBI:18420"/>
        <label>1</label>
    </ligand>
</feature>
<feature type="binding site" evidence="1">
    <location>
        <position position="190"/>
    </location>
    <ligand>
        <name>Mg(2+)</name>
        <dbReference type="ChEBI" id="CHEBI:18420"/>
        <label>2</label>
    </ligand>
</feature>
<feature type="binding site" evidence="1">
    <location>
        <position position="194"/>
    </location>
    <ligand>
        <name>Mg(2+)</name>
        <dbReference type="ChEBI" id="CHEBI:18420"/>
        <label>1</label>
    </ligand>
</feature>
<feature type="binding site" evidence="1">
    <location>
        <position position="226"/>
    </location>
    <ligand>
        <name>Mg(2+)</name>
        <dbReference type="ChEBI" id="CHEBI:18420"/>
        <label>2</label>
    </ligand>
</feature>
<feature type="binding site" evidence="1">
    <location>
        <position position="230"/>
    </location>
    <ligand>
        <name>Mg(2+)</name>
        <dbReference type="ChEBI" id="CHEBI:18420"/>
        <label>2</label>
    </ligand>
</feature>
<feature type="binding site" evidence="1">
    <location>
        <position position="251"/>
    </location>
    <ligand>
        <name>substrate</name>
    </ligand>
</feature>
<protein>
    <recommendedName>
        <fullName evidence="1">Ketol-acid reductoisomerase (NADP(+))</fullName>
        <shortName evidence="1">KARI</shortName>
        <ecNumber evidence="1">1.1.1.86</ecNumber>
    </recommendedName>
    <alternativeName>
        <fullName evidence="1">Acetohydroxy-acid isomeroreductase</fullName>
        <shortName evidence="1">AHIR</shortName>
    </alternativeName>
    <alternativeName>
        <fullName evidence="1">Alpha-keto-beta-hydroxylacyl reductoisomerase</fullName>
    </alternativeName>
    <alternativeName>
        <fullName evidence="1">Ketol-acid reductoisomerase type 1</fullName>
    </alternativeName>
    <alternativeName>
        <fullName evidence="1">Ketol-acid reductoisomerase type I</fullName>
    </alternativeName>
</protein>
<reference key="1">
    <citation type="journal article" date="2005" name="Proc. Natl. Acad. Sci. U.S.A.">
        <title>Whole genome sequence of Staphylococcus saprophyticus reveals the pathogenesis of uncomplicated urinary tract infection.</title>
        <authorList>
            <person name="Kuroda M."/>
            <person name="Yamashita A."/>
            <person name="Hirakawa H."/>
            <person name="Kumano M."/>
            <person name="Morikawa K."/>
            <person name="Higashide M."/>
            <person name="Maruyama A."/>
            <person name="Inose Y."/>
            <person name="Matoba K."/>
            <person name="Toh H."/>
            <person name="Kuhara S."/>
            <person name="Hattori M."/>
            <person name="Ohta T."/>
        </authorList>
    </citation>
    <scope>NUCLEOTIDE SEQUENCE [LARGE SCALE GENOMIC DNA]</scope>
    <source>
        <strain>ATCC 15305 / DSM 20229 / NCIMB 8711 / NCTC 7292 / S-41</strain>
    </source>
</reference>
<comment type="function">
    <text evidence="1">Involved in the biosynthesis of branched-chain amino acids (BCAA). Catalyzes an alkyl-migration followed by a ketol-acid reduction of (S)-2-acetolactate (S2AL) to yield (R)-2,3-dihydroxy-isovalerate. In the isomerase reaction, S2AL is rearranged via a Mg-dependent methyl migration to produce 3-hydroxy-3-methyl-2-ketobutyrate (HMKB). In the reductase reaction, this 2-ketoacid undergoes a metal-dependent reduction by NADPH to yield (R)-2,3-dihydroxy-isovalerate.</text>
</comment>
<comment type="catalytic activity">
    <reaction evidence="1">
        <text>(2R)-2,3-dihydroxy-3-methylbutanoate + NADP(+) = (2S)-2-acetolactate + NADPH + H(+)</text>
        <dbReference type="Rhea" id="RHEA:22068"/>
        <dbReference type="ChEBI" id="CHEBI:15378"/>
        <dbReference type="ChEBI" id="CHEBI:49072"/>
        <dbReference type="ChEBI" id="CHEBI:57783"/>
        <dbReference type="ChEBI" id="CHEBI:58349"/>
        <dbReference type="ChEBI" id="CHEBI:58476"/>
        <dbReference type="EC" id="1.1.1.86"/>
    </reaction>
</comment>
<comment type="catalytic activity">
    <reaction evidence="1">
        <text>(2R,3R)-2,3-dihydroxy-3-methylpentanoate + NADP(+) = (S)-2-ethyl-2-hydroxy-3-oxobutanoate + NADPH + H(+)</text>
        <dbReference type="Rhea" id="RHEA:13493"/>
        <dbReference type="ChEBI" id="CHEBI:15378"/>
        <dbReference type="ChEBI" id="CHEBI:49256"/>
        <dbReference type="ChEBI" id="CHEBI:49258"/>
        <dbReference type="ChEBI" id="CHEBI:57783"/>
        <dbReference type="ChEBI" id="CHEBI:58349"/>
        <dbReference type="EC" id="1.1.1.86"/>
    </reaction>
</comment>
<comment type="cofactor">
    <cofactor evidence="1">
        <name>Mg(2+)</name>
        <dbReference type="ChEBI" id="CHEBI:18420"/>
    </cofactor>
    <text evidence="1">Binds 2 magnesium ions per subunit.</text>
</comment>
<comment type="pathway">
    <text evidence="1">Amino-acid biosynthesis; L-isoleucine biosynthesis; L-isoleucine from 2-oxobutanoate: step 2/4.</text>
</comment>
<comment type="pathway">
    <text evidence="1">Amino-acid biosynthesis; L-valine biosynthesis; L-valine from pyruvate: step 2/4.</text>
</comment>
<comment type="similarity">
    <text evidence="1">Belongs to the ketol-acid reductoisomerase family.</text>
</comment>
<accession>Q49Z11</accession>
<keyword id="KW-0028">Amino-acid biosynthesis</keyword>
<keyword id="KW-0100">Branched-chain amino acid biosynthesis</keyword>
<keyword id="KW-0460">Magnesium</keyword>
<keyword id="KW-0479">Metal-binding</keyword>
<keyword id="KW-0521">NADP</keyword>
<keyword id="KW-0560">Oxidoreductase</keyword>
<keyword id="KW-1185">Reference proteome</keyword>
<organism>
    <name type="scientific">Staphylococcus saprophyticus subsp. saprophyticus (strain ATCC 15305 / DSM 20229 / NCIMB 8711 / NCTC 7292 / S-41)</name>
    <dbReference type="NCBI Taxonomy" id="342451"/>
    <lineage>
        <taxon>Bacteria</taxon>
        <taxon>Bacillati</taxon>
        <taxon>Bacillota</taxon>
        <taxon>Bacilli</taxon>
        <taxon>Bacillales</taxon>
        <taxon>Staphylococcaceae</taxon>
        <taxon>Staphylococcus</taxon>
    </lineage>
</organism>
<evidence type="ECO:0000255" key="1">
    <source>
        <dbReference type="HAMAP-Rule" id="MF_00435"/>
    </source>
</evidence>
<evidence type="ECO:0000255" key="2">
    <source>
        <dbReference type="PROSITE-ProRule" id="PRU01197"/>
    </source>
</evidence>
<evidence type="ECO:0000255" key="3">
    <source>
        <dbReference type="PROSITE-ProRule" id="PRU01198"/>
    </source>
</evidence>
<sequence length="334" mass="37020">MTTVYYDQSVTKDALQGKKVAIIGYGSQGHAHAQNLKDNGYDVIIGIRPGCSFDKAKDDGFEVYPVDEAAKQADVIMVLLPDEIQGQVYKEEIEPNLEANNALVFAHGFNIHFGVIQPPENVDVFLVAPKGPGHLVRRTFAEGSAVPALFAVEQDPSGEARDLALSYAKGIGATRAGVLETSFKEETETDLFGEQAVLCGGTTKLVQSGFETLVEAGYQPEIAYFEVLHEMKLIVDLMYEGGMENMRYSISNTAEFGDYVSGPRIITPDVKDNMKAVLDDIQKGNFSDRFIKDNQNNFEEFHKLREEQHGHQIEAVGRELRDMMPFIKSKSIEK</sequence>
<proteinExistence type="inferred from homology"/>
<dbReference type="EC" id="1.1.1.86" evidence="1"/>
<dbReference type="EMBL" id="AP008934">
    <property type="protein sequence ID" value="BAE17967.1"/>
    <property type="molecule type" value="Genomic_DNA"/>
</dbReference>
<dbReference type="RefSeq" id="WP_011302713.1">
    <property type="nucleotide sequence ID" value="NC_007350.1"/>
</dbReference>
<dbReference type="SMR" id="Q49Z11"/>
<dbReference type="GeneID" id="3617344"/>
<dbReference type="KEGG" id="ssp:SSP0822"/>
<dbReference type="PATRIC" id="fig|342451.11.peg.824"/>
<dbReference type="eggNOG" id="COG0059">
    <property type="taxonomic scope" value="Bacteria"/>
</dbReference>
<dbReference type="HOGENOM" id="CLU_033821_0_1_9"/>
<dbReference type="OrthoDB" id="9804088at2"/>
<dbReference type="UniPathway" id="UPA00047">
    <property type="reaction ID" value="UER00056"/>
</dbReference>
<dbReference type="UniPathway" id="UPA00049">
    <property type="reaction ID" value="UER00060"/>
</dbReference>
<dbReference type="Proteomes" id="UP000006371">
    <property type="component" value="Chromosome"/>
</dbReference>
<dbReference type="GO" id="GO:0005829">
    <property type="term" value="C:cytosol"/>
    <property type="evidence" value="ECO:0007669"/>
    <property type="project" value="TreeGrafter"/>
</dbReference>
<dbReference type="GO" id="GO:0004455">
    <property type="term" value="F:ketol-acid reductoisomerase activity"/>
    <property type="evidence" value="ECO:0007669"/>
    <property type="project" value="UniProtKB-UniRule"/>
</dbReference>
<dbReference type="GO" id="GO:0000287">
    <property type="term" value="F:magnesium ion binding"/>
    <property type="evidence" value="ECO:0007669"/>
    <property type="project" value="UniProtKB-UniRule"/>
</dbReference>
<dbReference type="GO" id="GO:0050661">
    <property type="term" value="F:NADP binding"/>
    <property type="evidence" value="ECO:0007669"/>
    <property type="project" value="InterPro"/>
</dbReference>
<dbReference type="GO" id="GO:0009097">
    <property type="term" value="P:isoleucine biosynthetic process"/>
    <property type="evidence" value="ECO:0007669"/>
    <property type="project" value="UniProtKB-UniRule"/>
</dbReference>
<dbReference type="GO" id="GO:0009099">
    <property type="term" value="P:L-valine biosynthetic process"/>
    <property type="evidence" value="ECO:0007669"/>
    <property type="project" value="UniProtKB-UniRule"/>
</dbReference>
<dbReference type="FunFam" id="3.40.50.720:FF:000023">
    <property type="entry name" value="Ketol-acid reductoisomerase (NADP(+))"/>
    <property type="match status" value="1"/>
</dbReference>
<dbReference type="Gene3D" id="6.10.240.10">
    <property type="match status" value="1"/>
</dbReference>
<dbReference type="Gene3D" id="3.40.50.720">
    <property type="entry name" value="NAD(P)-binding Rossmann-like Domain"/>
    <property type="match status" value="1"/>
</dbReference>
<dbReference type="HAMAP" id="MF_00435">
    <property type="entry name" value="IlvC"/>
    <property type="match status" value="1"/>
</dbReference>
<dbReference type="InterPro" id="IPR008927">
    <property type="entry name" value="6-PGluconate_DH-like_C_sf"/>
</dbReference>
<dbReference type="InterPro" id="IPR013023">
    <property type="entry name" value="KARI"/>
</dbReference>
<dbReference type="InterPro" id="IPR000506">
    <property type="entry name" value="KARI_C"/>
</dbReference>
<dbReference type="InterPro" id="IPR013116">
    <property type="entry name" value="KARI_N"/>
</dbReference>
<dbReference type="InterPro" id="IPR014359">
    <property type="entry name" value="KARI_prok"/>
</dbReference>
<dbReference type="InterPro" id="IPR036291">
    <property type="entry name" value="NAD(P)-bd_dom_sf"/>
</dbReference>
<dbReference type="NCBIfam" id="TIGR00465">
    <property type="entry name" value="ilvC"/>
    <property type="match status" value="1"/>
</dbReference>
<dbReference type="NCBIfam" id="NF004017">
    <property type="entry name" value="PRK05479.1"/>
    <property type="match status" value="1"/>
</dbReference>
<dbReference type="NCBIfam" id="NF009940">
    <property type="entry name" value="PRK13403.1"/>
    <property type="match status" value="1"/>
</dbReference>
<dbReference type="PANTHER" id="PTHR21371">
    <property type="entry name" value="KETOL-ACID REDUCTOISOMERASE, MITOCHONDRIAL"/>
    <property type="match status" value="1"/>
</dbReference>
<dbReference type="PANTHER" id="PTHR21371:SF1">
    <property type="entry name" value="KETOL-ACID REDUCTOISOMERASE, MITOCHONDRIAL"/>
    <property type="match status" value="1"/>
</dbReference>
<dbReference type="Pfam" id="PF01450">
    <property type="entry name" value="KARI_C"/>
    <property type="match status" value="1"/>
</dbReference>
<dbReference type="Pfam" id="PF07991">
    <property type="entry name" value="KARI_N"/>
    <property type="match status" value="1"/>
</dbReference>
<dbReference type="PIRSF" id="PIRSF000116">
    <property type="entry name" value="IlvC_gammaproteo"/>
    <property type="match status" value="1"/>
</dbReference>
<dbReference type="SUPFAM" id="SSF48179">
    <property type="entry name" value="6-phosphogluconate dehydrogenase C-terminal domain-like"/>
    <property type="match status" value="1"/>
</dbReference>
<dbReference type="SUPFAM" id="SSF51735">
    <property type="entry name" value="NAD(P)-binding Rossmann-fold domains"/>
    <property type="match status" value="1"/>
</dbReference>
<dbReference type="PROSITE" id="PS51851">
    <property type="entry name" value="KARI_C"/>
    <property type="match status" value="1"/>
</dbReference>
<dbReference type="PROSITE" id="PS51850">
    <property type="entry name" value="KARI_N"/>
    <property type="match status" value="1"/>
</dbReference>
<gene>
    <name evidence="1" type="primary">ilvC</name>
    <name type="ordered locus">SSP0822</name>
</gene>